<evidence type="ECO:0000255" key="1">
    <source>
        <dbReference type="HAMAP-Rule" id="MF_00382"/>
    </source>
</evidence>
<evidence type="ECO:0000305" key="2"/>
<proteinExistence type="inferred from homology"/>
<reference key="1">
    <citation type="journal article" date="2006" name="Transgenic Res.">
        <title>Efficient and stable transformation of Lactuca sativa L. cv. Cisco (lettuce) plastids.</title>
        <authorList>
            <person name="Kanamoto H."/>
            <person name="Yamashita A."/>
            <person name="Asao H."/>
            <person name="Okumura S."/>
            <person name="Takase H."/>
            <person name="Hattori M."/>
            <person name="Yokota A."/>
            <person name="Tomizawa K."/>
        </authorList>
    </citation>
    <scope>NUCLEOTIDE SEQUENCE [LARGE SCALE GENOMIC DNA]</scope>
    <source>
        <strain>cv. Cisco</strain>
    </source>
</reference>
<reference key="2">
    <citation type="submission" date="2006-01" db="EMBL/GenBank/DDBJ databases">
        <title>A comparison of the first two published chloroplast genomes in Asteraceae: Lactuca and Helianthus.</title>
        <authorList>
            <person name="Timme R.E."/>
            <person name="Kuehl J.V."/>
            <person name="Boore J.L."/>
            <person name="Jansen R.K."/>
        </authorList>
    </citation>
    <scope>NUCLEOTIDE SEQUENCE [LARGE SCALE GENOMIC DNA]</scope>
    <source>
        <strain>cv. Salinas</strain>
    </source>
</reference>
<protein>
    <recommendedName>
        <fullName evidence="1">Large ribosomal subunit protein bL20c</fullName>
    </recommendedName>
    <alternativeName>
        <fullName evidence="2">50S ribosomal protein L20, chloroplastic</fullName>
    </alternativeName>
</protein>
<organism>
    <name type="scientific">Lactuca sativa</name>
    <name type="common">Garden lettuce</name>
    <dbReference type="NCBI Taxonomy" id="4236"/>
    <lineage>
        <taxon>Eukaryota</taxon>
        <taxon>Viridiplantae</taxon>
        <taxon>Streptophyta</taxon>
        <taxon>Embryophyta</taxon>
        <taxon>Tracheophyta</taxon>
        <taxon>Spermatophyta</taxon>
        <taxon>Magnoliopsida</taxon>
        <taxon>eudicotyledons</taxon>
        <taxon>Gunneridae</taxon>
        <taxon>Pentapetalae</taxon>
        <taxon>asterids</taxon>
        <taxon>campanulids</taxon>
        <taxon>Asterales</taxon>
        <taxon>Asteraceae</taxon>
        <taxon>Cichorioideae</taxon>
        <taxon>Cichorieae</taxon>
        <taxon>Lactucinae</taxon>
        <taxon>Lactuca</taxon>
    </lineage>
</organism>
<gene>
    <name evidence="1" type="primary">rpl20</name>
</gene>
<comment type="function">
    <text evidence="1">Binds directly to 23S ribosomal RNA and is necessary for the in vitro assembly process of the 50S ribosomal subunit. It is not involved in the protein synthesizing functions of that subunit.</text>
</comment>
<comment type="subcellular location">
    <subcellularLocation>
        <location>Plastid</location>
        <location>Chloroplast</location>
    </subcellularLocation>
</comment>
<comment type="similarity">
    <text evidence="1">Belongs to the bacterial ribosomal protein bL20 family.</text>
</comment>
<geneLocation type="chloroplast"/>
<name>RK20_LACSA</name>
<accession>Q332V5</accession>
<dbReference type="EMBL" id="AP007232">
    <property type="protein sequence ID" value="BAE47617.1"/>
    <property type="molecule type" value="Genomic_DNA"/>
</dbReference>
<dbReference type="EMBL" id="DQ383816">
    <property type="protein sequence ID" value="ABD47256.1"/>
    <property type="molecule type" value="Genomic_DNA"/>
</dbReference>
<dbReference type="RefSeq" id="YP_398352.1">
    <property type="nucleotide sequence ID" value="NC_007578.1"/>
</dbReference>
<dbReference type="SMR" id="Q332V5"/>
<dbReference type="GeneID" id="3772792"/>
<dbReference type="KEGG" id="lsv:3772792"/>
<dbReference type="OrthoDB" id="10251781at2759"/>
<dbReference type="GO" id="GO:0009507">
    <property type="term" value="C:chloroplast"/>
    <property type="evidence" value="ECO:0007669"/>
    <property type="project" value="UniProtKB-SubCell"/>
</dbReference>
<dbReference type="GO" id="GO:1990904">
    <property type="term" value="C:ribonucleoprotein complex"/>
    <property type="evidence" value="ECO:0007669"/>
    <property type="project" value="UniProtKB-KW"/>
</dbReference>
<dbReference type="GO" id="GO:0005840">
    <property type="term" value="C:ribosome"/>
    <property type="evidence" value="ECO:0007669"/>
    <property type="project" value="UniProtKB-KW"/>
</dbReference>
<dbReference type="GO" id="GO:0019843">
    <property type="term" value="F:rRNA binding"/>
    <property type="evidence" value="ECO:0007669"/>
    <property type="project" value="UniProtKB-UniRule"/>
</dbReference>
<dbReference type="GO" id="GO:0003735">
    <property type="term" value="F:structural constituent of ribosome"/>
    <property type="evidence" value="ECO:0007669"/>
    <property type="project" value="InterPro"/>
</dbReference>
<dbReference type="GO" id="GO:0000027">
    <property type="term" value="P:ribosomal large subunit assembly"/>
    <property type="evidence" value="ECO:0007669"/>
    <property type="project" value="UniProtKB-UniRule"/>
</dbReference>
<dbReference type="GO" id="GO:0006412">
    <property type="term" value="P:translation"/>
    <property type="evidence" value="ECO:0007669"/>
    <property type="project" value="InterPro"/>
</dbReference>
<dbReference type="CDD" id="cd07026">
    <property type="entry name" value="Ribosomal_L20"/>
    <property type="match status" value="1"/>
</dbReference>
<dbReference type="FunFam" id="1.10.1900.20:FF:000001">
    <property type="entry name" value="50S ribosomal protein L20"/>
    <property type="match status" value="1"/>
</dbReference>
<dbReference type="Gene3D" id="6.10.160.10">
    <property type="match status" value="1"/>
</dbReference>
<dbReference type="Gene3D" id="1.10.1900.20">
    <property type="entry name" value="Ribosomal protein L20"/>
    <property type="match status" value="1"/>
</dbReference>
<dbReference type="HAMAP" id="MF_00382">
    <property type="entry name" value="Ribosomal_bL20"/>
    <property type="match status" value="1"/>
</dbReference>
<dbReference type="InterPro" id="IPR005813">
    <property type="entry name" value="Ribosomal_bL20"/>
</dbReference>
<dbReference type="InterPro" id="IPR049946">
    <property type="entry name" value="RIBOSOMAL_L20_CS"/>
</dbReference>
<dbReference type="InterPro" id="IPR035566">
    <property type="entry name" value="Ribosomal_protein_bL20_C"/>
</dbReference>
<dbReference type="NCBIfam" id="TIGR01032">
    <property type="entry name" value="rplT_bact"/>
    <property type="match status" value="1"/>
</dbReference>
<dbReference type="PANTHER" id="PTHR10986">
    <property type="entry name" value="39S RIBOSOMAL PROTEIN L20"/>
    <property type="match status" value="1"/>
</dbReference>
<dbReference type="Pfam" id="PF00453">
    <property type="entry name" value="Ribosomal_L20"/>
    <property type="match status" value="1"/>
</dbReference>
<dbReference type="PRINTS" id="PR00062">
    <property type="entry name" value="RIBOSOMALL20"/>
</dbReference>
<dbReference type="SUPFAM" id="SSF74731">
    <property type="entry name" value="Ribosomal protein L20"/>
    <property type="match status" value="1"/>
</dbReference>
<dbReference type="PROSITE" id="PS00937">
    <property type="entry name" value="RIBOSOMAL_L20"/>
    <property type="match status" value="1"/>
</dbReference>
<sequence length="126" mass="15021">MTRIRRGYIARRRRTKIRLFASSFRGAHSRLTRTITQQKIRALVSAHRDRDKQKINFRRLWITRINAAIRERGVCYSYSRLINGLYKRQLLLNRKILAQIAISNRNCLYMISNEIIKEVGWKESTG</sequence>
<feature type="chain" id="PRO_0000276413" description="Large ribosomal subunit protein bL20c">
    <location>
        <begin position="1"/>
        <end position="126"/>
    </location>
</feature>
<keyword id="KW-0150">Chloroplast</keyword>
<keyword id="KW-0934">Plastid</keyword>
<keyword id="KW-0687">Ribonucleoprotein</keyword>
<keyword id="KW-0689">Ribosomal protein</keyword>
<keyword id="KW-0694">RNA-binding</keyword>
<keyword id="KW-0699">rRNA-binding</keyword>